<accession>P45374</accession>
<accession>D3RUY8</accession>
<organism>
    <name type="scientific">Allochromatium vinosum (strain ATCC 17899 / DSM 180 / NBRC 103801 / NCIMB 10441 / D)</name>
    <name type="common">Chromatium vinosum</name>
    <dbReference type="NCBI Taxonomy" id="572477"/>
    <lineage>
        <taxon>Bacteria</taxon>
        <taxon>Pseudomonadati</taxon>
        <taxon>Pseudomonadota</taxon>
        <taxon>Gammaproteobacteria</taxon>
        <taxon>Chromatiales</taxon>
        <taxon>Chromatiaceae</taxon>
        <taxon>Allochromatium</taxon>
    </lineage>
</organism>
<protein>
    <recommendedName>
        <fullName>Uncharacterized protein Alvin_0065</fullName>
    </recommendedName>
    <alternativeName>
        <fullName>ORF5</fullName>
    </alternativeName>
</protein>
<name>Y065_ALLVD</name>
<sequence length="120" mass="13904">MNTTDSLKTVNEWTNKSVERMTSFGELNVRLFEKLAARQMDAVNLYMDHSMRLMKLATESKGYNDLFKGQVDATKELSERVMAESKATMQFFGDARDEYRVWFEKSLNDVSEDLRKSVAV</sequence>
<dbReference type="EMBL" id="L01112">
    <property type="protein sequence ID" value="AAA23324.1"/>
    <property type="molecule type" value="Genomic_DNA"/>
</dbReference>
<dbReference type="EMBL" id="CP001896">
    <property type="protein sequence ID" value="ADC61037.1"/>
    <property type="molecule type" value="Genomic_DNA"/>
</dbReference>
<dbReference type="PIR" id="S29278">
    <property type="entry name" value="S29278"/>
</dbReference>
<dbReference type="RefSeq" id="WP_012969313.1">
    <property type="nucleotide sequence ID" value="NC_013851.1"/>
</dbReference>
<dbReference type="SMR" id="P45374"/>
<dbReference type="STRING" id="572477.Alvin_0065"/>
<dbReference type="KEGG" id="alv:Alvin_0065"/>
<dbReference type="eggNOG" id="ENOG5031DYF">
    <property type="taxonomic scope" value="Bacteria"/>
</dbReference>
<dbReference type="HOGENOM" id="CLU_2037006_0_0_6"/>
<dbReference type="OrthoDB" id="7061308at2"/>
<dbReference type="Proteomes" id="UP000001441">
    <property type="component" value="Chromosome"/>
</dbReference>
<dbReference type="InterPro" id="IPR018968">
    <property type="entry name" value="Phasin"/>
</dbReference>
<dbReference type="Pfam" id="PF09361">
    <property type="entry name" value="Phasin_2"/>
    <property type="match status" value="1"/>
</dbReference>
<proteinExistence type="predicted"/>
<gene>
    <name type="ordered locus">Alvin_0065</name>
</gene>
<feature type="chain" id="PRO_0000066404" description="Uncharacterized protein Alvin_0065">
    <location>
        <begin position="1"/>
        <end position="120"/>
    </location>
</feature>
<keyword id="KW-1185">Reference proteome</keyword>
<reference key="1">
    <citation type="journal article" date="1992" name="Eur. J. Biochem.">
        <title>Cloning and nucleotide sequences of genes relevant for biosynthesis of poly(3-hydroxybutyric acid) in Chromatium vinosum strain D.</title>
        <authorList>
            <person name="Liebergesell M."/>
            <person name="Steinbuechel A."/>
        </authorList>
    </citation>
    <scope>NUCLEOTIDE SEQUENCE [GENOMIC DNA]</scope>
    <source>
        <strain>ATCC 17899 / DSM 180 / NBRC 103801 / NCIMB 10441 / D</strain>
    </source>
</reference>
<reference key="2">
    <citation type="journal article" date="2011" name="Stand. Genomic Sci.">
        <title>Complete genome sequence of Allochromatium vinosum DSM 180(T).</title>
        <authorList>
            <person name="Weissgerber T."/>
            <person name="Zigann R."/>
            <person name="Bruce D."/>
            <person name="Chang Y.J."/>
            <person name="Detter J.C."/>
            <person name="Han C."/>
            <person name="Hauser L."/>
            <person name="Jeffries C.D."/>
            <person name="Land M."/>
            <person name="Munk A.C."/>
            <person name="Tapia R."/>
            <person name="Dahl C."/>
        </authorList>
    </citation>
    <scope>NUCLEOTIDE SEQUENCE [LARGE SCALE GENOMIC DNA]</scope>
    <source>
        <strain>ATCC 17899 / DSM 180 / NBRC 103801 / NCIMB 10441 / D</strain>
    </source>
</reference>